<reference key="1">
    <citation type="online journal article" date="1995" name="Plant Gene Register">
        <title>cDNA sequences encoding for two homologues of Lupinus luteus (L.) IPR-like proteins (LlR18A and LlR18B).</title>
        <authorList>
            <person name="Sikorski M.M."/>
            <person name="Szlagowska A.E."/>
            <person name="Legocki A.B."/>
        </authorList>
        <locator>PGR95-114</locator>
    </citation>
    <scope>NUCLEOTIDE SEQUENCE [MRNA]</scope>
    <source>
        <strain>cv. Ventus</strain>
    </source>
</reference>
<reference key="2">
    <citation type="submission" date="1997-06" db="EMBL/GenBank/DDBJ databases">
        <authorList>
            <person name="Sikorski M.M."/>
            <person name="Szlagowska A.E."/>
        </authorList>
    </citation>
    <scope>NUCLEOTIDE SEQUENCE [GENOMIC DNA]</scope>
    <source>
        <strain>cv. Ventus</strain>
        <tissue>Root</tissue>
    </source>
</reference>
<reference key="3">
    <citation type="journal article" date="1999" name="Acta Crystallogr. D">
        <title>Crystallization and preliminary X-ray structure determination of Lupinus luteus PR10 protein.</title>
        <authorList>
            <person name="Biesiadka J."/>
            <person name="Sikorski M.M."/>
            <person name="Bujacz G."/>
            <person name="Jaskolski M."/>
        </authorList>
    </citation>
    <scope>X-RAY CRYSTALLOGRAPHY (1.95 ANGSTROMS) OF 2-156</scope>
    <scope>TISSUE SPECIFICITY</scope>
    <scope>INDUCTION</scope>
</reference>
<reference evidence="6" key="4">
    <citation type="journal article" date="2002" name="J. Mol. Biol.">
        <title>Crystal structures of two homologous pathogenesis-related proteins from yellow lupine.</title>
        <authorList>
            <person name="Biesiadka J."/>
            <person name="Bujacz G."/>
            <person name="Sikorski M.M."/>
            <person name="Jaskolski M."/>
        </authorList>
    </citation>
    <scope>X-RAY CRYSTALLOGRAPHY (1.95 ANGSTROMS) OF 2-156</scope>
</reference>
<reference evidence="7 8 9" key="5">
    <citation type="journal article" date="2016" name="J. Struct. Biol.">
        <title>Crystallographic and CD probing of ligand-induced conformational changes in a plant PR-10 protein.</title>
        <authorList>
            <person name="Sliwiak J."/>
            <person name="Dolot R."/>
            <person name="Michalska K."/>
            <person name="Szpotkowski K."/>
            <person name="Bujacz G."/>
            <person name="Sikorski M."/>
            <person name="Jaskolski M."/>
        </authorList>
    </citation>
    <scope>X-RAY CRYSTALLOGRAPHY (1.32 ANGSTROMS) OF 2-156 IN COMPLEX WITH TRANS-ZEATIN</scope>
</reference>
<keyword id="KW-0002">3D-structure</keyword>
<keyword id="KW-0020">Allergen</keyword>
<keyword id="KW-0106">Calcium</keyword>
<keyword id="KW-0963">Cytoplasm</keyword>
<keyword id="KW-0378">Hydrolase</keyword>
<keyword id="KW-0479">Metal-binding</keyword>
<keyword id="KW-0540">Nuclease</keyword>
<keyword id="KW-0568">Pathogenesis-related protein</keyword>
<keyword id="KW-0611">Plant defense</keyword>
<feature type="chain" id="PRO_0000154192" description="Protein LlR18A">
    <location>
        <begin position="1"/>
        <end position="156"/>
    </location>
</feature>
<feature type="binding site" evidence="4 7">
    <location>
        <position position="8"/>
    </location>
    <ligand>
        <name>trans-zeatin</name>
        <dbReference type="ChEBI" id="CHEBI:16522"/>
        <label>1</label>
    </ligand>
</feature>
<feature type="binding site" evidence="4 7">
    <location>
        <position position="28"/>
    </location>
    <ligand>
        <name>trans-zeatin</name>
        <dbReference type="ChEBI" id="CHEBI:16522"/>
        <label>2</label>
    </ligand>
</feature>
<feature type="binding site" evidence="2">
    <location>
        <position position="32"/>
    </location>
    <ligand>
        <name>Ca(2+)</name>
        <dbReference type="ChEBI" id="CHEBI:29108"/>
    </ligand>
</feature>
<feature type="binding site" evidence="2">
    <location>
        <position position="38"/>
    </location>
    <ligand>
        <name>Ca(2+)</name>
        <dbReference type="ChEBI" id="CHEBI:29108"/>
    </ligand>
</feature>
<feature type="binding site" evidence="4 7">
    <location>
        <position position="54"/>
    </location>
    <ligand>
        <name>trans-zeatin</name>
        <dbReference type="ChEBI" id="CHEBI:16522"/>
        <label>2</label>
    </ligand>
</feature>
<feature type="binding site" evidence="4 7">
    <location>
        <position position="133"/>
    </location>
    <ligand>
        <name>trans-zeatin</name>
        <dbReference type="ChEBI" id="CHEBI:16522"/>
        <label>3</label>
    </ligand>
</feature>
<feature type="binding site" evidence="4 7">
    <location>
        <position position="136"/>
    </location>
    <ligand>
        <name>trans-zeatin</name>
        <dbReference type="ChEBI" id="CHEBI:16522"/>
        <label>3</label>
    </ligand>
</feature>
<feature type="strand" evidence="10">
    <location>
        <begin position="3"/>
        <end position="14"/>
    </location>
</feature>
<feature type="helix" evidence="10">
    <location>
        <begin position="16"/>
        <end position="23"/>
    </location>
</feature>
<feature type="turn" evidence="10">
    <location>
        <begin position="24"/>
        <end position="26"/>
    </location>
</feature>
<feature type="helix" evidence="10">
    <location>
        <begin position="27"/>
        <end position="34"/>
    </location>
</feature>
<feature type="strand" evidence="10">
    <location>
        <begin position="38"/>
        <end position="49"/>
    </location>
</feature>
<feature type="strand" evidence="10">
    <location>
        <begin position="53"/>
        <end position="58"/>
    </location>
</feature>
<feature type="strand" evidence="10">
    <location>
        <begin position="65"/>
        <end position="75"/>
    </location>
</feature>
<feature type="helix" evidence="10">
    <location>
        <begin position="76"/>
        <end position="78"/>
    </location>
</feature>
<feature type="strand" evidence="10">
    <location>
        <begin position="80"/>
        <end position="88"/>
    </location>
</feature>
<feature type="strand" evidence="10">
    <location>
        <begin position="95"/>
        <end position="106"/>
    </location>
</feature>
<feature type="helix" evidence="10">
    <location>
        <begin position="108"/>
        <end position="110"/>
    </location>
</feature>
<feature type="strand" evidence="10">
    <location>
        <begin position="112"/>
        <end position="125"/>
    </location>
</feature>
<feature type="helix" evidence="10">
    <location>
        <begin position="129"/>
        <end position="132"/>
    </location>
</feature>
<feature type="turn" evidence="10">
    <location>
        <begin position="138"/>
        <end position="140"/>
    </location>
</feature>
<feature type="helix" evidence="10">
    <location>
        <begin position="141"/>
        <end position="152"/>
    </location>
</feature>
<proteinExistence type="evidence at protein level"/>
<protein>
    <recommendedName>
        <fullName>Protein LlR18A</fullName>
        <ecNumber evidence="1">3.1.27.-</ecNumber>
    </recommendedName>
    <alternativeName>
        <fullName>LlPR10.1A</fullName>
    </alternativeName>
    <allergenName evidence="5">Lup l 4</allergenName>
</protein>
<name>L18A_LUPLU</name>
<comment type="function">
    <text evidence="1 2">Class II ribonuclease (RNase) (By similarity). Binds to cytokinins (By similarity). Interacts with melatonin (By similarity).</text>
</comment>
<comment type="subcellular location">
    <subcellularLocation>
        <location evidence="2">Cytoplasm</location>
        <location evidence="2">Cytosol</location>
    </subcellularLocation>
</comment>
<comment type="tissue specificity">
    <text evidence="3">Expressed constitutively in roots.</text>
</comment>
<comment type="induction">
    <text evidence="3">In leaves by pathogenic bacteria.</text>
</comment>
<comment type="allergen">
    <text evidence="5">Causes an allergic reaction in human.</text>
</comment>
<comment type="similarity">
    <text evidence="5">Belongs to the BetVI family.</text>
</comment>
<gene>
    <name type="primary">LLR18A</name>
</gene>
<accession>P52778</accession>
<evidence type="ECO:0000250" key="1">
    <source>
        <dbReference type="UniProtKB" id="P52779"/>
    </source>
</evidence>
<evidence type="ECO:0000250" key="2">
    <source>
        <dbReference type="UniProtKB" id="Q9LLQ2"/>
    </source>
</evidence>
<evidence type="ECO:0000269" key="3">
    <source>
    </source>
</evidence>
<evidence type="ECO:0000269" key="4">
    <source>
    </source>
</evidence>
<evidence type="ECO:0000305" key="5"/>
<evidence type="ECO:0007744" key="6">
    <source>
        <dbReference type="PDB" id="1ICX"/>
    </source>
</evidence>
<evidence type="ECO:0007744" key="7">
    <source>
        <dbReference type="PDB" id="4RYV"/>
    </source>
</evidence>
<evidence type="ECO:0007744" key="8">
    <source>
        <dbReference type="PDB" id="4Y31"/>
    </source>
</evidence>
<evidence type="ECO:0007744" key="9">
    <source>
        <dbReference type="PDB" id="5C9Y"/>
    </source>
</evidence>
<evidence type="ECO:0007829" key="10">
    <source>
        <dbReference type="PDB" id="4Y31"/>
    </source>
</evidence>
<sequence>MGIFAFENEQSSTVAPAKLYKALTKDSDEIVPKVIEPIQSVEIVEGNGGPGTIKKIIAIHDGHTSFVLHKLDAIDEANLTYNYSIIGGEGLDESLEKISYESKILPGPDGGSIGKINVKFHTKGDVLSETVRDQAKFKGLGLFKAIEGYVLAHPDY</sequence>
<organism>
    <name type="scientific">Lupinus luteus</name>
    <name type="common">European yellow lupine</name>
    <dbReference type="NCBI Taxonomy" id="3873"/>
    <lineage>
        <taxon>Eukaryota</taxon>
        <taxon>Viridiplantae</taxon>
        <taxon>Streptophyta</taxon>
        <taxon>Embryophyta</taxon>
        <taxon>Tracheophyta</taxon>
        <taxon>Spermatophyta</taxon>
        <taxon>Magnoliopsida</taxon>
        <taxon>eudicotyledons</taxon>
        <taxon>Gunneridae</taxon>
        <taxon>Pentapetalae</taxon>
        <taxon>rosids</taxon>
        <taxon>fabids</taxon>
        <taxon>Fabales</taxon>
        <taxon>Fabaceae</taxon>
        <taxon>Papilionoideae</taxon>
        <taxon>50 kb inversion clade</taxon>
        <taxon>genistoids sensu lato</taxon>
        <taxon>core genistoids</taxon>
        <taxon>Genisteae</taxon>
        <taxon>Lupinus</taxon>
    </lineage>
</organism>
<dbReference type="EC" id="3.1.27.-" evidence="1"/>
<dbReference type="EMBL" id="X79974">
    <property type="protein sequence ID" value="CAA56298.1"/>
    <property type="molecule type" value="mRNA"/>
</dbReference>
<dbReference type="EMBL" id="AF002277">
    <property type="protein sequence ID" value="AAC12790.1"/>
    <property type="molecule type" value="Genomic_DNA"/>
</dbReference>
<dbReference type="PDB" id="1ICX">
    <property type="method" value="X-ray"/>
    <property type="resolution" value="1.95 A"/>
    <property type="chains" value="A=2-156"/>
</dbReference>
<dbReference type="PDB" id="4RYV">
    <property type="method" value="X-ray"/>
    <property type="resolution" value="1.38 A"/>
    <property type="chains" value="A=2-156"/>
</dbReference>
<dbReference type="PDB" id="4Y31">
    <property type="method" value="X-ray"/>
    <property type="resolution" value="1.32 A"/>
    <property type="chains" value="A=2-156"/>
</dbReference>
<dbReference type="PDB" id="5C9Y">
    <property type="method" value="X-ray"/>
    <property type="resolution" value="1.50 A"/>
    <property type="chains" value="A=2-156"/>
</dbReference>
<dbReference type="PDBsum" id="1ICX"/>
<dbReference type="PDBsum" id="4RYV"/>
<dbReference type="PDBsum" id="4Y31"/>
<dbReference type="PDBsum" id="5C9Y"/>
<dbReference type="SMR" id="P52778"/>
<dbReference type="Allergome" id="9727">
    <property type="allergen name" value="Lup l 4"/>
</dbReference>
<dbReference type="EvolutionaryTrace" id="P52778"/>
<dbReference type="GO" id="GO:0005829">
    <property type="term" value="C:cytosol"/>
    <property type="evidence" value="ECO:0007669"/>
    <property type="project" value="UniProtKB-SubCell"/>
</dbReference>
<dbReference type="GO" id="GO:0005634">
    <property type="term" value="C:nucleus"/>
    <property type="evidence" value="ECO:0007669"/>
    <property type="project" value="TreeGrafter"/>
</dbReference>
<dbReference type="GO" id="GO:0010427">
    <property type="term" value="F:abscisic acid binding"/>
    <property type="evidence" value="ECO:0007669"/>
    <property type="project" value="InterPro"/>
</dbReference>
<dbReference type="GO" id="GO:0005509">
    <property type="term" value="F:calcium ion binding"/>
    <property type="evidence" value="ECO:0000250"/>
    <property type="project" value="UniProtKB"/>
</dbReference>
<dbReference type="GO" id="GO:0044373">
    <property type="term" value="F:cytokinin binding"/>
    <property type="evidence" value="ECO:0000314"/>
    <property type="project" value="UniProtKB"/>
</dbReference>
<dbReference type="GO" id="GO:1904408">
    <property type="term" value="F:melatonin binding"/>
    <property type="evidence" value="ECO:0000250"/>
    <property type="project" value="UniProtKB"/>
</dbReference>
<dbReference type="GO" id="GO:0004864">
    <property type="term" value="F:protein phosphatase inhibitor activity"/>
    <property type="evidence" value="ECO:0007669"/>
    <property type="project" value="InterPro"/>
</dbReference>
<dbReference type="GO" id="GO:0004540">
    <property type="term" value="F:RNA nuclease activity"/>
    <property type="evidence" value="ECO:0000250"/>
    <property type="project" value="UniProtKB"/>
</dbReference>
<dbReference type="GO" id="GO:0038023">
    <property type="term" value="F:signaling receptor activity"/>
    <property type="evidence" value="ECO:0007669"/>
    <property type="project" value="InterPro"/>
</dbReference>
<dbReference type="GO" id="GO:0009738">
    <property type="term" value="P:abscisic acid-activated signaling pathway"/>
    <property type="evidence" value="ECO:0007669"/>
    <property type="project" value="InterPro"/>
</dbReference>
<dbReference type="GO" id="GO:0006952">
    <property type="term" value="P:defense response"/>
    <property type="evidence" value="ECO:0007669"/>
    <property type="project" value="UniProtKB-KW"/>
</dbReference>
<dbReference type="CDD" id="cd07816">
    <property type="entry name" value="Bet_v1-like"/>
    <property type="match status" value="1"/>
</dbReference>
<dbReference type="FunFam" id="3.30.530.20:FF:000007">
    <property type="entry name" value="Major pollen allergen Bet v 1-A"/>
    <property type="match status" value="1"/>
</dbReference>
<dbReference type="Gene3D" id="3.30.530.20">
    <property type="match status" value="1"/>
</dbReference>
<dbReference type="InterPro" id="IPR000916">
    <property type="entry name" value="Bet_v_I/MLP"/>
</dbReference>
<dbReference type="InterPro" id="IPR024949">
    <property type="entry name" value="Bet_v_I_allergen"/>
</dbReference>
<dbReference type="InterPro" id="IPR050279">
    <property type="entry name" value="Plant_def-hormone_signal"/>
</dbReference>
<dbReference type="InterPro" id="IPR023393">
    <property type="entry name" value="START-like_dom_sf"/>
</dbReference>
<dbReference type="PANTHER" id="PTHR31213:SF88">
    <property type="entry name" value="ABA-RESPONSIVE PROTEIN"/>
    <property type="match status" value="1"/>
</dbReference>
<dbReference type="PANTHER" id="PTHR31213">
    <property type="entry name" value="OS08G0374000 PROTEIN-RELATED"/>
    <property type="match status" value="1"/>
</dbReference>
<dbReference type="Pfam" id="PF00407">
    <property type="entry name" value="Bet_v_1"/>
    <property type="match status" value="1"/>
</dbReference>
<dbReference type="PRINTS" id="PR00634">
    <property type="entry name" value="BETALLERGEN"/>
</dbReference>
<dbReference type="SUPFAM" id="SSF55961">
    <property type="entry name" value="Bet v1-like"/>
    <property type="match status" value="1"/>
</dbReference>
<dbReference type="PROSITE" id="PS00451">
    <property type="entry name" value="PATHOGENESIS_BETVI"/>
    <property type="match status" value="1"/>
</dbReference>